<organism>
    <name type="scientific">Enterobacter sp. (strain 638)</name>
    <dbReference type="NCBI Taxonomy" id="399742"/>
    <lineage>
        <taxon>Bacteria</taxon>
        <taxon>Pseudomonadati</taxon>
        <taxon>Pseudomonadota</taxon>
        <taxon>Gammaproteobacteria</taxon>
        <taxon>Enterobacterales</taxon>
        <taxon>Enterobacteriaceae</taxon>
        <taxon>Enterobacter</taxon>
    </lineage>
</organism>
<feature type="chain" id="PRO_1000069057" description="Protein TusB">
    <location>
        <begin position="1"/>
        <end position="95"/>
    </location>
</feature>
<name>TUSB_ENT38</name>
<evidence type="ECO:0000255" key="1">
    <source>
        <dbReference type="HAMAP-Rule" id="MF_01564"/>
    </source>
</evidence>
<protein>
    <recommendedName>
        <fullName evidence="1">Protein TusB</fullName>
    </recommendedName>
    <alternativeName>
        <fullName evidence="1">tRNA 2-thiouridine synthesizing protein B</fullName>
    </alternativeName>
</protein>
<comment type="function">
    <text evidence="1">Part of a sulfur-relay system required for 2-thiolation of 5-methylaminomethyl-2-thiouridine (mnm(5)s(2)U) at tRNA wobble positions.</text>
</comment>
<comment type="subunit">
    <text evidence="1">Heterohexamer, formed by a dimer of trimers. The hexameric TusBCD complex contains 2 copies each of TusB, TusC and TusD. The TusBCD complex interacts with TusE.</text>
</comment>
<comment type="subcellular location">
    <subcellularLocation>
        <location evidence="1">Cytoplasm</location>
    </subcellularLocation>
</comment>
<comment type="similarity">
    <text evidence="1">Belongs to the DsrH/TusB family.</text>
</comment>
<sequence length="95" mass="10388">MLHTLSHSPWHADIEGLLRMLGDGDELLLIQDGVLAAIDGGRFIEILNNAPIKVIALKDDIDARGLAGQISTKIDVVGYTDFVKLAIKHPTQMSW</sequence>
<gene>
    <name evidence="1" type="primary">tusB</name>
    <name type="ordered locus">Ent638_3760</name>
</gene>
<keyword id="KW-0963">Cytoplasm</keyword>
<keyword id="KW-0819">tRNA processing</keyword>
<proteinExistence type="inferred from homology"/>
<dbReference type="EMBL" id="CP000653">
    <property type="protein sequence ID" value="ABP62416.1"/>
    <property type="molecule type" value="Genomic_DNA"/>
</dbReference>
<dbReference type="RefSeq" id="WP_015960722.1">
    <property type="nucleotide sequence ID" value="NC_009436.1"/>
</dbReference>
<dbReference type="SMR" id="A4WFD6"/>
<dbReference type="STRING" id="399742.Ent638_3760"/>
<dbReference type="KEGG" id="ent:Ent638_3760"/>
<dbReference type="eggNOG" id="COG2168">
    <property type="taxonomic scope" value="Bacteria"/>
</dbReference>
<dbReference type="HOGENOM" id="CLU_166087_2_1_6"/>
<dbReference type="OrthoDB" id="9795117at2"/>
<dbReference type="Proteomes" id="UP000000230">
    <property type="component" value="Chromosome"/>
</dbReference>
<dbReference type="GO" id="GO:1990228">
    <property type="term" value="C:sulfurtransferase complex"/>
    <property type="evidence" value="ECO:0007669"/>
    <property type="project" value="TreeGrafter"/>
</dbReference>
<dbReference type="GO" id="GO:0002143">
    <property type="term" value="P:tRNA wobble position uridine thiolation"/>
    <property type="evidence" value="ECO:0007669"/>
    <property type="project" value="InterPro"/>
</dbReference>
<dbReference type="Gene3D" id="3.40.1260.10">
    <property type="entry name" value="DsrEFH-like"/>
    <property type="match status" value="1"/>
</dbReference>
<dbReference type="HAMAP" id="MF_01564">
    <property type="entry name" value="Thiourid_synth_B"/>
    <property type="match status" value="1"/>
</dbReference>
<dbReference type="InterPro" id="IPR027396">
    <property type="entry name" value="DsrEFH-like"/>
</dbReference>
<dbReference type="InterPro" id="IPR023526">
    <property type="entry name" value="Sulphur_relay_TusB"/>
</dbReference>
<dbReference type="InterPro" id="IPR007215">
    <property type="entry name" value="Sulphur_relay_TusB/DsrH"/>
</dbReference>
<dbReference type="NCBIfam" id="NF010035">
    <property type="entry name" value="PRK13510.1"/>
    <property type="match status" value="1"/>
</dbReference>
<dbReference type="NCBIfam" id="TIGR03011">
    <property type="entry name" value="sulf_tusB_dsrH"/>
    <property type="match status" value="1"/>
</dbReference>
<dbReference type="PANTHER" id="PTHR37526">
    <property type="entry name" value="PROTEIN TUSB"/>
    <property type="match status" value="1"/>
</dbReference>
<dbReference type="PANTHER" id="PTHR37526:SF1">
    <property type="entry name" value="PROTEIN TUSB"/>
    <property type="match status" value="1"/>
</dbReference>
<dbReference type="Pfam" id="PF04077">
    <property type="entry name" value="DsrH"/>
    <property type="match status" value="1"/>
</dbReference>
<dbReference type="SUPFAM" id="SSF75169">
    <property type="entry name" value="DsrEFH-like"/>
    <property type="match status" value="1"/>
</dbReference>
<accession>A4WFD6</accession>
<reference key="1">
    <citation type="journal article" date="2010" name="PLoS Genet.">
        <title>Genome sequence of the plant growth promoting endophytic bacterium Enterobacter sp. 638.</title>
        <authorList>
            <person name="Taghavi S."/>
            <person name="van der Lelie D."/>
            <person name="Hoffman A."/>
            <person name="Zhang Y.B."/>
            <person name="Walla M.D."/>
            <person name="Vangronsveld J."/>
            <person name="Newman L."/>
            <person name="Monchy S."/>
        </authorList>
    </citation>
    <scope>NUCLEOTIDE SEQUENCE [LARGE SCALE GENOMIC DNA]</scope>
    <source>
        <strain>638</strain>
    </source>
</reference>